<feature type="chain" id="PRO_1000125935" description="Small ribosomal subunit protein uS7">
    <location>
        <begin position="1"/>
        <end position="156"/>
    </location>
</feature>
<sequence length="156" mass="17789">MPRRGPVTPREIPPDPVYNSVLVQKLINKVMLDGKKSIAEKIVYGAMDIIREKTKQDPLTVLEKAVQNVTPLLEVRPRRVGGATYQVPIEVPPRRGLSLALRWIVRAARERKGMPMKERLALEILDAFNNTGGAIKKRDEMHRMAEANKAFAHYRW</sequence>
<protein>
    <recommendedName>
        <fullName evidence="1">Small ribosomal subunit protein uS7</fullName>
    </recommendedName>
    <alternativeName>
        <fullName evidence="2">30S ribosomal protein S7</fullName>
    </alternativeName>
</protein>
<reference key="1">
    <citation type="journal article" date="2016" name="Front. Microbiol.">
        <title>The complete genome sequence of hyperthermophile Dictyoglomus turgidum DSM 6724 reveals a specialized carbohydrate fermentor.</title>
        <authorList>
            <person name="Brumm P.J."/>
            <person name="Gowda K."/>
            <person name="Robb F.T."/>
            <person name="Mead D.A."/>
        </authorList>
    </citation>
    <scope>NUCLEOTIDE SEQUENCE [LARGE SCALE GENOMIC DNA]</scope>
    <source>
        <strain>DSM 6724 / Z-1310</strain>
    </source>
</reference>
<gene>
    <name evidence="1" type="primary">rpsG</name>
    <name type="ordered locus">Dtur_0977</name>
</gene>
<dbReference type="EMBL" id="CP001251">
    <property type="protein sequence ID" value="ACK42257.1"/>
    <property type="molecule type" value="Genomic_DNA"/>
</dbReference>
<dbReference type="RefSeq" id="WP_012583341.1">
    <property type="nucleotide sequence ID" value="NC_011661.1"/>
</dbReference>
<dbReference type="RefSeq" id="YP_002352871.1">
    <property type="nucleotide sequence ID" value="NC_011661.1"/>
</dbReference>
<dbReference type="SMR" id="B8E1C9"/>
<dbReference type="FunCoup" id="B8E1C9">
    <property type="interactions" value="389"/>
</dbReference>
<dbReference type="STRING" id="515635.Dtur_0977"/>
<dbReference type="EnsemblBacteria" id="ACK42257">
    <property type="protein sequence ID" value="ACK42257"/>
    <property type="gene ID" value="Dtur_0977"/>
</dbReference>
<dbReference type="KEGG" id="dtu:Dtur_0977"/>
<dbReference type="PATRIC" id="fig|515635.4.peg.1014"/>
<dbReference type="eggNOG" id="COG0049">
    <property type="taxonomic scope" value="Bacteria"/>
</dbReference>
<dbReference type="HOGENOM" id="CLU_072226_1_1_0"/>
<dbReference type="InParanoid" id="B8E1C9"/>
<dbReference type="OrthoDB" id="9807653at2"/>
<dbReference type="Proteomes" id="UP000007719">
    <property type="component" value="Chromosome"/>
</dbReference>
<dbReference type="GO" id="GO:0022627">
    <property type="term" value="C:cytosolic small ribosomal subunit"/>
    <property type="evidence" value="ECO:0000318"/>
    <property type="project" value="GO_Central"/>
</dbReference>
<dbReference type="GO" id="GO:0005840">
    <property type="term" value="C:ribosome"/>
    <property type="evidence" value="ECO:0000318"/>
    <property type="project" value="GO_Central"/>
</dbReference>
<dbReference type="GO" id="GO:0003729">
    <property type="term" value="F:mRNA binding"/>
    <property type="evidence" value="ECO:0000318"/>
    <property type="project" value="GO_Central"/>
</dbReference>
<dbReference type="GO" id="GO:0019843">
    <property type="term" value="F:rRNA binding"/>
    <property type="evidence" value="ECO:0000318"/>
    <property type="project" value="GO_Central"/>
</dbReference>
<dbReference type="GO" id="GO:0003735">
    <property type="term" value="F:structural constituent of ribosome"/>
    <property type="evidence" value="ECO:0000318"/>
    <property type="project" value="GO_Central"/>
</dbReference>
<dbReference type="GO" id="GO:0000049">
    <property type="term" value="F:tRNA binding"/>
    <property type="evidence" value="ECO:0007669"/>
    <property type="project" value="UniProtKB-UniRule"/>
</dbReference>
<dbReference type="GO" id="GO:0000028">
    <property type="term" value="P:ribosomal small subunit assembly"/>
    <property type="evidence" value="ECO:0000318"/>
    <property type="project" value="GO_Central"/>
</dbReference>
<dbReference type="GO" id="GO:0006412">
    <property type="term" value="P:translation"/>
    <property type="evidence" value="ECO:0000318"/>
    <property type="project" value="GO_Central"/>
</dbReference>
<dbReference type="CDD" id="cd14869">
    <property type="entry name" value="uS7_Bacteria"/>
    <property type="match status" value="1"/>
</dbReference>
<dbReference type="FunFam" id="1.10.455.10:FF:000001">
    <property type="entry name" value="30S ribosomal protein S7"/>
    <property type="match status" value="1"/>
</dbReference>
<dbReference type="Gene3D" id="1.10.455.10">
    <property type="entry name" value="Ribosomal protein S7 domain"/>
    <property type="match status" value="1"/>
</dbReference>
<dbReference type="HAMAP" id="MF_00480_B">
    <property type="entry name" value="Ribosomal_uS7_B"/>
    <property type="match status" value="1"/>
</dbReference>
<dbReference type="InterPro" id="IPR000235">
    <property type="entry name" value="Ribosomal_uS7"/>
</dbReference>
<dbReference type="InterPro" id="IPR005717">
    <property type="entry name" value="Ribosomal_uS7_bac/org-type"/>
</dbReference>
<dbReference type="InterPro" id="IPR020606">
    <property type="entry name" value="Ribosomal_uS7_CS"/>
</dbReference>
<dbReference type="InterPro" id="IPR023798">
    <property type="entry name" value="Ribosomal_uS7_dom"/>
</dbReference>
<dbReference type="InterPro" id="IPR036823">
    <property type="entry name" value="Ribosomal_uS7_dom_sf"/>
</dbReference>
<dbReference type="NCBIfam" id="TIGR01029">
    <property type="entry name" value="rpsG_bact"/>
    <property type="match status" value="1"/>
</dbReference>
<dbReference type="PANTHER" id="PTHR11205">
    <property type="entry name" value="RIBOSOMAL PROTEIN S7"/>
    <property type="match status" value="1"/>
</dbReference>
<dbReference type="Pfam" id="PF00177">
    <property type="entry name" value="Ribosomal_S7"/>
    <property type="match status" value="1"/>
</dbReference>
<dbReference type="PIRSF" id="PIRSF002122">
    <property type="entry name" value="RPS7p_RPS7a_RPS5e_RPS7o"/>
    <property type="match status" value="1"/>
</dbReference>
<dbReference type="SUPFAM" id="SSF47973">
    <property type="entry name" value="Ribosomal protein S7"/>
    <property type="match status" value="1"/>
</dbReference>
<dbReference type="PROSITE" id="PS00052">
    <property type="entry name" value="RIBOSOMAL_S7"/>
    <property type="match status" value="1"/>
</dbReference>
<evidence type="ECO:0000255" key="1">
    <source>
        <dbReference type="HAMAP-Rule" id="MF_00480"/>
    </source>
</evidence>
<evidence type="ECO:0000305" key="2"/>
<proteinExistence type="inferred from homology"/>
<organism>
    <name type="scientific">Dictyoglomus turgidum (strain DSM 6724 / Z-1310)</name>
    <dbReference type="NCBI Taxonomy" id="515635"/>
    <lineage>
        <taxon>Bacteria</taxon>
        <taxon>Pseudomonadati</taxon>
        <taxon>Dictyoglomota</taxon>
        <taxon>Dictyoglomia</taxon>
        <taxon>Dictyoglomales</taxon>
        <taxon>Dictyoglomaceae</taxon>
        <taxon>Dictyoglomus</taxon>
    </lineage>
</organism>
<accession>B8E1C9</accession>
<name>RS7_DICTD</name>
<keyword id="KW-1185">Reference proteome</keyword>
<keyword id="KW-0687">Ribonucleoprotein</keyword>
<keyword id="KW-0689">Ribosomal protein</keyword>
<keyword id="KW-0694">RNA-binding</keyword>
<keyword id="KW-0699">rRNA-binding</keyword>
<keyword id="KW-0820">tRNA-binding</keyword>
<comment type="function">
    <text evidence="1">One of the primary rRNA binding proteins, it binds directly to 16S rRNA where it nucleates assembly of the head domain of the 30S subunit. Is located at the subunit interface close to the decoding center, probably blocks exit of the E-site tRNA.</text>
</comment>
<comment type="subunit">
    <text evidence="1">Part of the 30S ribosomal subunit. Contacts proteins S9 and S11.</text>
</comment>
<comment type="similarity">
    <text evidence="1">Belongs to the universal ribosomal protein uS7 family.</text>
</comment>